<comment type="function">
    <text evidence="1">Cell wall formation. Adds enolpyruvyl to UDP-N-acetylglucosamine.</text>
</comment>
<comment type="catalytic activity">
    <reaction evidence="1">
        <text>phosphoenolpyruvate + UDP-N-acetyl-alpha-D-glucosamine = UDP-N-acetyl-3-O-(1-carboxyvinyl)-alpha-D-glucosamine + phosphate</text>
        <dbReference type="Rhea" id="RHEA:18681"/>
        <dbReference type="ChEBI" id="CHEBI:43474"/>
        <dbReference type="ChEBI" id="CHEBI:57705"/>
        <dbReference type="ChEBI" id="CHEBI:58702"/>
        <dbReference type="ChEBI" id="CHEBI:68483"/>
        <dbReference type="EC" id="2.5.1.7"/>
    </reaction>
</comment>
<comment type="pathway">
    <text evidence="1">Cell wall biogenesis; peptidoglycan biosynthesis.</text>
</comment>
<comment type="subcellular location">
    <subcellularLocation>
        <location evidence="1">Cytoplasm</location>
    </subcellularLocation>
</comment>
<comment type="similarity">
    <text evidence="1">Belongs to the EPSP synthase family. MurA subfamily.</text>
</comment>
<accession>Q315P9</accession>
<feature type="chain" id="PRO_0000231200" description="UDP-N-acetylglucosamine 1-carboxyvinyltransferase">
    <location>
        <begin position="1"/>
        <end position="416"/>
    </location>
</feature>
<feature type="active site" description="Proton donor" evidence="1">
    <location>
        <position position="115"/>
    </location>
</feature>
<feature type="binding site" evidence="1">
    <location>
        <begin position="22"/>
        <end position="23"/>
    </location>
    <ligand>
        <name>phosphoenolpyruvate</name>
        <dbReference type="ChEBI" id="CHEBI:58702"/>
    </ligand>
</feature>
<feature type="binding site" evidence="1">
    <location>
        <position position="91"/>
    </location>
    <ligand>
        <name>UDP-N-acetyl-alpha-D-glucosamine</name>
        <dbReference type="ChEBI" id="CHEBI:57705"/>
    </ligand>
</feature>
<feature type="binding site" evidence="1">
    <location>
        <begin position="120"/>
        <end position="124"/>
    </location>
    <ligand>
        <name>UDP-N-acetyl-alpha-D-glucosamine</name>
        <dbReference type="ChEBI" id="CHEBI:57705"/>
    </ligand>
</feature>
<feature type="binding site" evidence="1">
    <location>
        <position position="303"/>
    </location>
    <ligand>
        <name>UDP-N-acetyl-alpha-D-glucosamine</name>
        <dbReference type="ChEBI" id="CHEBI:57705"/>
    </ligand>
</feature>
<feature type="binding site" evidence="1">
    <location>
        <position position="325"/>
    </location>
    <ligand>
        <name>UDP-N-acetyl-alpha-D-glucosamine</name>
        <dbReference type="ChEBI" id="CHEBI:57705"/>
    </ligand>
</feature>
<feature type="modified residue" description="2-(S-cysteinyl)pyruvic acid O-phosphothioketal" evidence="1">
    <location>
        <position position="115"/>
    </location>
</feature>
<keyword id="KW-0131">Cell cycle</keyword>
<keyword id="KW-0132">Cell division</keyword>
<keyword id="KW-0133">Cell shape</keyword>
<keyword id="KW-0961">Cell wall biogenesis/degradation</keyword>
<keyword id="KW-0963">Cytoplasm</keyword>
<keyword id="KW-0573">Peptidoglycan synthesis</keyword>
<keyword id="KW-0670">Pyruvate</keyword>
<keyword id="KW-1185">Reference proteome</keyword>
<keyword id="KW-0808">Transferase</keyword>
<name>MURA_OLEA2</name>
<organism>
    <name type="scientific">Oleidesulfovibrio alaskensis (strain ATCC BAA-1058 / DSM 17464 / G20)</name>
    <name type="common">Desulfovibrio alaskensis</name>
    <dbReference type="NCBI Taxonomy" id="207559"/>
    <lineage>
        <taxon>Bacteria</taxon>
        <taxon>Pseudomonadati</taxon>
        <taxon>Thermodesulfobacteriota</taxon>
        <taxon>Desulfovibrionia</taxon>
        <taxon>Desulfovibrionales</taxon>
        <taxon>Desulfovibrionaceae</taxon>
        <taxon>Oleidesulfovibrio</taxon>
    </lineage>
</organism>
<protein>
    <recommendedName>
        <fullName evidence="1">UDP-N-acetylglucosamine 1-carboxyvinyltransferase</fullName>
        <ecNumber evidence="1">2.5.1.7</ecNumber>
    </recommendedName>
    <alternativeName>
        <fullName evidence="1">Enoylpyruvate transferase</fullName>
    </alternativeName>
    <alternativeName>
        <fullName evidence="1">UDP-N-acetylglucosamine enolpyruvyl transferase</fullName>
        <shortName evidence="1">EPT</shortName>
    </alternativeName>
</protein>
<dbReference type="EC" id="2.5.1.7" evidence="1"/>
<dbReference type="EMBL" id="CP000112">
    <property type="protein sequence ID" value="ABB37347.1"/>
    <property type="molecule type" value="Genomic_DNA"/>
</dbReference>
<dbReference type="RefSeq" id="WP_011366662.1">
    <property type="nucleotide sequence ID" value="NC_007519.1"/>
</dbReference>
<dbReference type="SMR" id="Q315P9"/>
<dbReference type="STRING" id="207559.Dde_0546"/>
<dbReference type="KEGG" id="dde:Dde_0546"/>
<dbReference type="eggNOG" id="COG0766">
    <property type="taxonomic scope" value="Bacteria"/>
</dbReference>
<dbReference type="HOGENOM" id="CLU_027387_0_0_7"/>
<dbReference type="UniPathway" id="UPA00219"/>
<dbReference type="Proteomes" id="UP000002710">
    <property type="component" value="Chromosome"/>
</dbReference>
<dbReference type="GO" id="GO:0005737">
    <property type="term" value="C:cytoplasm"/>
    <property type="evidence" value="ECO:0007669"/>
    <property type="project" value="UniProtKB-SubCell"/>
</dbReference>
<dbReference type="GO" id="GO:0008760">
    <property type="term" value="F:UDP-N-acetylglucosamine 1-carboxyvinyltransferase activity"/>
    <property type="evidence" value="ECO:0007669"/>
    <property type="project" value="UniProtKB-UniRule"/>
</dbReference>
<dbReference type="GO" id="GO:0051301">
    <property type="term" value="P:cell division"/>
    <property type="evidence" value="ECO:0007669"/>
    <property type="project" value="UniProtKB-KW"/>
</dbReference>
<dbReference type="GO" id="GO:0071555">
    <property type="term" value="P:cell wall organization"/>
    <property type="evidence" value="ECO:0007669"/>
    <property type="project" value="UniProtKB-KW"/>
</dbReference>
<dbReference type="GO" id="GO:0009252">
    <property type="term" value="P:peptidoglycan biosynthetic process"/>
    <property type="evidence" value="ECO:0007669"/>
    <property type="project" value="UniProtKB-UniRule"/>
</dbReference>
<dbReference type="GO" id="GO:0008360">
    <property type="term" value="P:regulation of cell shape"/>
    <property type="evidence" value="ECO:0007669"/>
    <property type="project" value="UniProtKB-KW"/>
</dbReference>
<dbReference type="GO" id="GO:0019277">
    <property type="term" value="P:UDP-N-acetylgalactosamine biosynthetic process"/>
    <property type="evidence" value="ECO:0007669"/>
    <property type="project" value="InterPro"/>
</dbReference>
<dbReference type="CDD" id="cd01555">
    <property type="entry name" value="UdpNAET"/>
    <property type="match status" value="1"/>
</dbReference>
<dbReference type="FunFam" id="3.65.10.10:FF:000001">
    <property type="entry name" value="UDP-N-acetylglucosamine 1-carboxyvinyltransferase"/>
    <property type="match status" value="1"/>
</dbReference>
<dbReference type="Gene3D" id="3.65.10.10">
    <property type="entry name" value="Enolpyruvate transferase domain"/>
    <property type="match status" value="2"/>
</dbReference>
<dbReference type="HAMAP" id="MF_00111">
    <property type="entry name" value="MurA"/>
    <property type="match status" value="1"/>
</dbReference>
<dbReference type="InterPro" id="IPR001986">
    <property type="entry name" value="Enolpyruvate_Tfrase_dom"/>
</dbReference>
<dbReference type="InterPro" id="IPR036968">
    <property type="entry name" value="Enolpyruvate_Tfrase_sf"/>
</dbReference>
<dbReference type="InterPro" id="IPR050068">
    <property type="entry name" value="MurA_subfamily"/>
</dbReference>
<dbReference type="InterPro" id="IPR013792">
    <property type="entry name" value="RNA3'P_cycl/enolpyr_Trfase_a/b"/>
</dbReference>
<dbReference type="InterPro" id="IPR005750">
    <property type="entry name" value="UDP_GlcNAc_COvinyl_MurA"/>
</dbReference>
<dbReference type="NCBIfam" id="TIGR01072">
    <property type="entry name" value="murA"/>
    <property type="match status" value="1"/>
</dbReference>
<dbReference type="NCBIfam" id="NF006873">
    <property type="entry name" value="PRK09369.1"/>
    <property type="match status" value="1"/>
</dbReference>
<dbReference type="PANTHER" id="PTHR43783">
    <property type="entry name" value="UDP-N-ACETYLGLUCOSAMINE 1-CARBOXYVINYLTRANSFERASE"/>
    <property type="match status" value="1"/>
</dbReference>
<dbReference type="PANTHER" id="PTHR43783:SF1">
    <property type="entry name" value="UDP-N-ACETYLGLUCOSAMINE 1-CARBOXYVINYLTRANSFERASE"/>
    <property type="match status" value="1"/>
</dbReference>
<dbReference type="Pfam" id="PF00275">
    <property type="entry name" value="EPSP_synthase"/>
    <property type="match status" value="1"/>
</dbReference>
<dbReference type="SUPFAM" id="SSF55205">
    <property type="entry name" value="EPT/RTPC-like"/>
    <property type="match status" value="1"/>
</dbReference>
<proteinExistence type="inferred from homology"/>
<gene>
    <name evidence="1" type="primary">murA</name>
    <name type="ordered locus">Dde_0546</name>
</gene>
<sequence>MDKLVIKGGVPLEGTIRVSGSKNASLPILMASILLDEPVIYRNVPRLRDIHTTNKLLGILGCPAEFQGDAVHVRPCDLNPEAPYELVKTMRASVLCLGPLLARLGEARVAYPGGCAIGARPVDLHLSALEKMGAEFELDSGYIVGRCRQLQGAHIRFDFPTVGGTENLLMAATLAKGETILENAAREPEVIDLADFLCACGADITGQGTDVIRIRGVERLHGCEYRIMPDRIEAGTFMVAAGITRGNLLIEDCPDDALDAVSQKLRDMGLHVSREEGGTRVRYQGHLESTDIVTHPYPGFPTDMQAQFMALMCVADGFGMVEETIFENRFMHVLELVRMGADVRLVGRTARVRGGRQLRGAPVMASDLRASASLVLAGLAAQGETHVQRIYHLDRGYESIEEKLCPVGADIRRVPE</sequence>
<reference key="1">
    <citation type="journal article" date="2011" name="J. Bacteriol.">
        <title>Complete genome sequence and updated annotation of Desulfovibrio alaskensis G20.</title>
        <authorList>
            <person name="Hauser L.J."/>
            <person name="Land M.L."/>
            <person name="Brown S.D."/>
            <person name="Larimer F."/>
            <person name="Keller K.L."/>
            <person name="Rapp-Giles B.J."/>
            <person name="Price M.N."/>
            <person name="Lin M."/>
            <person name="Bruce D.C."/>
            <person name="Detter J.C."/>
            <person name="Tapia R."/>
            <person name="Han C.S."/>
            <person name="Goodwin L.A."/>
            <person name="Cheng J.F."/>
            <person name="Pitluck S."/>
            <person name="Copeland A."/>
            <person name="Lucas S."/>
            <person name="Nolan M."/>
            <person name="Lapidus A.L."/>
            <person name="Palumbo A.V."/>
            <person name="Wall J.D."/>
        </authorList>
    </citation>
    <scope>NUCLEOTIDE SEQUENCE [LARGE SCALE GENOMIC DNA]</scope>
    <source>
        <strain>ATCC BAA-1058 / DSM 17464 / G20</strain>
    </source>
</reference>
<evidence type="ECO:0000255" key="1">
    <source>
        <dbReference type="HAMAP-Rule" id="MF_00111"/>
    </source>
</evidence>